<geneLocation type="mitochondrion"/>
<reference key="1">
    <citation type="journal article" date="1995" name="Genetics">
        <title>Complete sequence of the mitochondrial DNA of the annelid worm Lumbricus terrestris.</title>
        <authorList>
            <person name="Boore J.L."/>
            <person name="Brown W.M."/>
        </authorList>
    </citation>
    <scope>NUCLEOTIDE SEQUENCE [GENOMIC DNA]</scope>
</reference>
<name>COX1_LUMTE</name>
<keyword id="KW-0106">Calcium</keyword>
<keyword id="KW-0186">Copper</keyword>
<keyword id="KW-0249">Electron transport</keyword>
<keyword id="KW-0349">Heme</keyword>
<keyword id="KW-0408">Iron</keyword>
<keyword id="KW-0460">Magnesium</keyword>
<keyword id="KW-0472">Membrane</keyword>
<keyword id="KW-0479">Metal-binding</keyword>
<keyword id="KW-0496">Mitochondrion</keyword>
<keyword id="KW-0999">Mitochondrion inner membrane</keyword>
<keyword id="KW-0679">Respiratory chain</keyword>
<keyword id="KW-1278">Translocase</keyword>
<keyword id="KW-0812">Transmembrane</keyword>
<keyword id="KW-1133">Transmembrane helix</keyword>
<keyword id="KW-0813">Transport</keyword>
<evidence type="ECO:0000250" key="1">
    <source>
        <dbReference type="UniProtKB" id="P00396"/>
    </source>
</evidence>
<evidence type="ECO:0000250" key="2">
    <source>
        <dbReference type="UniProtKB" id="P00401"/>
    </source>
</evidence>
<evidence type="ECO:0000255" key="3"/>
<evidence type="ECO:0000305" key="4"/>
<dbReference type="EC" id="7.1.1.9"/>
<dbReference type="EMBL" id="U24570">
    <property type="protein sequence ID" value="AAC46864.1"/>
    <property type="molecule type" value="Genomic_DNA"/>
</dbReference>
<dbReference type="PIR" id="S58985">
    <property type="entry name" value="S58985"/>
</dbReference>
<dbReference type="RefSeq" id="NP_008238.1">
    <property type="nucleotide sequence ID" value="NC_001673.1"/>
</dbReference>
<dbReference type="GeneID" id="807923"/>
<dbReference type="CTD" id="4512"/>
<dbReference type="UniPathway" id="UPA00705"/>
<dbReference type="GO" id="GO:0005743">
    <property type="term" value="C:mitochondrial inner membrane"/>
    <property type="evidence" value="ECO:0007669"/>
    <property type="project" value="UniProtKB-SubCell"/>
</dbReference>
<dbReference type="GO" id="GO:0045277">
    <property type="term" value="C:respiratory chain complex IV"/>
    <property type="evidence" value="ECO:0007669"/>
    <property type="project" value="InterPro"/>
</dbReference>
<dbReference type="GO" id="GO:0004129">
    <property type="term" value="F:cytochrome-c oxidase activity"/>
    <property type="evidence" value="ECO:0007669"/>
    <property type="project" value="UniProtKB-EC"/>
</dbReference>
<dbReference type="GO" id="GO:0020037">
    <property type="term" value="F:heme binding"/>
    <property type="evidence" value="ECO:0007669"/>
    <property type="project" value="InterPro"/>
</dbReference>
<dbReference type="GO" id="GO:0046872">
    <property type="term" value="F:metal ion binding"/>
    <property type="evidence" value="ECO:0007669"/>
    <property type="project" value="UniProtKB-KW"/>
</dbReference>
<dbReference type="GO" id="GO:0015990">
    <property type="term" value="P:electron transport coupled proton transport"/>
    <property type="evidence" value="ECO:0007669"/>
    <property type="project" value="TreeGrafter"/>
</dbReference>
<dbReference type="GO" id="GO:0006123">
    <property type="term" value="P:mitochondrial electron transport, cytochrome c to oxygen"/>
    <property type="evidence" value="ECO:0007669"/>
    <property type="project" value="TreeGrafter"/>
</dbReference>
<dbReference type="CDD" id="cd01663">
    <property type="entry name" value="Cyt_c_Oxidase_I"/>
    <property type="match status" value="1"/>
</dbReference>
<dbReference type="FunFam" id="1.20.210.10:FF:000001">
    <property type="entry name" value="Cytochrome c oxidase subunit 1"/>
    <property type="match status" value="1"/>
</dbReference>
<dbReference type="Gene3D" id="1.20.210.10">
    <property type="entry name" value="Cytochrome c oxidase-like, subunit I domain"/>
    <property type="match status" value="1"/>
</dbReference>
<dbReference type="InterPro" id="IPR023616">
    <property type="entry name" value="Cyt_c_oxase-like_su1_dom"/>
</dbReference>
<dbReference type="InterPro" id="IPR036927">
    <property type="entry name" value="Cyt_c_oxase-like_su1_sf"/>
</dbReference>
<dbReference type="InterPro" id="IPR000883">
    <property type="entry name" value="Cyt_C_Oxase_1"/>
</dbReference>
<dbReference type="InterPro" id="IPR023615">
    <property type="entry name" value="Cyt_c_Oxase_su1_BS"/>
</dbReference>
<dbReference type="InterPro" id="IPR033944">
    <property type="entry name" value="Cyt_c_oxase_su1_dom"/>
</dbReference>
<dbReference type="PANTHER" id="PTHR10422">
    <property type="entry name" value="CYTOCHROME C OXIDASE SUBUNIT 1"/>
    <property type="match status" value="1"/>
</dbReference>
<dbReference type="PANTHER" id="PTHR10422:SF18">
    <property type="entry name" value="CYTOCHROME C OXIDASE SUBUNIT 1"/>
    <property type="match status" value="1"/>
</dbReference>
<dbReference type="Pfam" id="PF00115">
    <property type="entry name" value="COX1"/>
    <property type="match status" value="1"/>
</dbReference>
<dbReference type="PRINTS" id="PR01165">
    <property type="entry name" value="CYCOXIDASEI"/>
</dbReference>
<dbReference type="SUPFAM" id="SSF81442">
    <property type="entry name" value="Cytochrome c oxidase subunit I-like"/>
    <property type="match status" value="1"/>
</dbReference>
<dbReference type="PROSITE" id="PS50855">
    <property type="entry name" value="COX1"/>
    <property type="match status" value="1"/>
</dbReference>
<dbReference type="PROSITE" id="PS00077">
    <property type="entry name" value="COX1_CUB"/>
    <property type="match status" value="1"/>
</dbReference>
<organism>
    <name type="scientific">Lumbricus terrestris</name>
    <name type="common">Common earthworm</name>
    <dbReference type="NCBI Taxonomy" id="6398"/>
    <lineage>
        <taxon>Eukaryota</taxon>
        <taxon>Metazoa</taxon>
        <taxon>Spiralia</taxon>
        <taxon>Lophotrochozoa</taxon>
        <taxon>Annelida</taxon>
        <taxon>Clitellata</taxon>
        <taxon>Oligochaeta</taxon>
        <taxon>Crassiclitellata</taxon>
        <taxon>Lumbricina</taxon>
        <taxon>Lumbricidae</taxon>
        <taxon>Lumbricinae</taxon>
        <taxon>Lumbricus</taxon>
    </lineage>
</organism>
<proteinExistence type="inferred from homology"/>
<protein>
    <recommendedName>
        <fullName>Cytochrome c oxidase subunit 1</fullName>
        <ecNumber>7.1.1.9</ecNumber>
    </recommendedName>
    <alternativeName>
        <fullName>Cytochrome c oxidase polypeptide I</fullName>
    </alternativeName>
</protein>
<sequence length="513" mass="56809">MRWFYSTNHKDIGTLYFILGVWAGMVGAGMSLLIRIELSQPGAFLGSDQLYNTIVTAHXFVMIFFLVMPVFIGGFGNWLLPLMLGAPDMAFPRLNNMSFWLLPPSLILLVSSAAVEKGAGTGWTVYPPLASNLAHAGPSVDLAIFSLHLAGASSILGAINFITTVINMRWSGLRLERIPLFVWAVLITVVLLLLSLPVLAGAITMLLTDRNLNTSFFDPAGGGDPILYQHLFWFFGHPEVYILILPGFGAISHIVSHYTAKLEPFGALGMIYAMLGIAVLGFIVWAHHMFTVGLDVDTRAYFTAVTMIIAVPTGIKVFSWLATIHGSKIKYETPVLWALGFIFLFTTGGLTGIILSNSSLDIILHDTYYVVAHFHYVLSMGAVFAIFAAFTHWFPLLTGLTLHHRWANAQFFLMFLGVNTTFFPQHFLGLSGMPRRYSDYPDAFMKWNVVSSFGSLLSFVALMLFIFILWEAFASQRSVISSPHMSSALEWSDPILPLDFHNLSETGIITYPK</sequence>
<feature type="chain" id="PRO_0000183357" description="Cytochrome c oxidase subunit 1">
    <location>
        <begin position="1"/>
        <end position="513"/>
    </location>
</feature>
<feature type="transmembrane region" description="Helical" evidence="3">
    <location>
        <begin position="14"/>
        <end position="34"/>
    </location>
</feature>
<feature type="transmembrane region" description="Helical" evidence="3">
    <location>
        <begin position="60"/>
        <end position="80"/>
    </location>
</feature>
<feature type="transmembrane region" description="Helical" evidence="3">
    <location>
        <begin position="96"/>
        <end position="116"/>
    </location>
</feature>
<feature type="transmembrane region" description="Helical" evidence="3">
    <location>
        <begin position="142"/>
        <end position="162"/>
    </location>
</feature>
<feature type="transmembrane region" description="Helical" evidence="3">
    <location>
        <begin position="180"/>
        <end position="200"/>
    </location>
</feature>
<feature type="transmembrane region" description="Helical" evidence="3">
    <location>
        <begin position="231"/>
        <end position="251"/>
    </location>
</feature>
<feature type="transmembrane region" description="Helical" evidence="3">
    <location>
        <begin position="265"/>
        <end position="285"/>
    </location>
</feature>
<feature type="transmembrane region" description="Helical" evidence="3">
    <location>
        <begin position="304"/>
        <end position="324"/>
    </location>
</feature>
<feature type="transmembrane region" description="Helical" evidence="3">
    <location>
        <begin position="335"/>
        <end position="355"/>
    </location>
</feature>
<feature type="transmembrane region" description="Helical" evidence="3">
    <location>
        <begin position="377"/>
        <end position="397"/>
    </location>
</feature>
<feature type="transmembrane region" description="Helical" evidence="3">
    <location>
        <begin position="411"/>
        <end position="431"/>
    </location>
</feature>
<feature type="transmembrane region" description="Helical" evidence="3">
    <location>
        <begin position="453"/>
        <end position="473"/>
    </location>
</feature>
<feature type="binding site" evidence="2">
    <location>
        <position position="37"/>
    </location>
    <ligand>
        <name>Ca(2+)</name>
        <dbReference type="ChEBI" id="CHEBI:29108"/>
    </ligand>
</feature>
<feature type="binding site" evidence="2">
    <location>
        <position position="42"/>
    </location>
    <ligand>
        <name>Ca(2+)</name>
        <dbReference type="ChEBI" id="CHEBI:29108"/>
    </ligand>
</feature>
<feature type="binding site" description="axial binding residue" evidence="2">
    <location>
        <position position="58"/>
    </location>
    <ligand>
        <name>Fe(II)-heme a</name>
        <dbReference type="ChEBI" id="CHEBI:61715"/>
        <note>low-spin</note>
    </ligand>
    <ligandPart>
        <name>Fe</name>
        <dbReference type="ChEBI" id="CHEBI:18248"/>
    </ligandPart>
</feature>
<feature type="binding site" evidence="2">
    <location>
        <position position="237"/>
    </location>
    <ligand>
        <name>Cu cation</name>
        <dbReference type="ChEBI" id="CHEBI:23378"/>
        <label>B</label>
    </ligand>
</feature>
<feature type="binding site" evidence="1">
    <location>
        <position position="241"/>
    </location>
    <ligand>
        <name>O2</name>
        <dbReference type="ChEBI" id="CHEBI:15379"/>
    </ligand>
</feature>
<feature type="binding site" evidence="2">
    <location>
        <position position="287"/>
    </location>
    <ligand>
        <name>Cu cation</name>
        <dbReference type="ChEBI" id="CHEBI:23378"/>
        <label>B</label>
    </ligand>
</feature>
<feature type="binding site" evidence="2">
    <location>
        <position position="288"/>
    </location>
    <ligand>
        <name>Cu cation</name>
        <dbReference type="ChEBI" id="CHEBI:23378"/>
        <label>B</label>
    </ligand>
</feature>
<feature type="binding site" evidence="2">
    <location>
        <position position="365"/>
    </location>
    <ligand>
        <name>Mg(2+)</name>
        <dbReference type="ChEBI" id="CHEBI:18420"/>
        <note>ligand shared with subunit 2</note>
    </ligand>
</feature>
<feature type="binding site" evidence="2">
    <location>
        <position position="366"/>
    </location>
    <ligand>
        <name>Mg(2+)</name>
        <dbReference type="ChEBI" id="CHEBI:18420"/>
        <note>ligand shared with subunit 2</note>
    </ligand>
</feature>
<feature type="binding site" description="axial binding residue" evidence="2">
    <location>
        <position position="373"/>
    </location>
    <ligand>
        <name>heme a3</name>
        <dbReference type="ChEBI" id="CHEBI:83282"/>
        <note>high-spin</note>
    </ligand>
    <ligandPart>
        <name>Fe</name>
        <dbReference type="ChEBI" id="CHEBI:18248"/>
    </ligandPart>
</feature>
<feature type="binding site" description="axial binding residue" evidence="2">
    <location>
        <position position="375"/>
    </location>
    <ligand>
        <name>Fe(II)-heme a</name>
        <dbReference type="ChEBI" id="CHEBI:61715"/>
        <note>low-spin</note>
    </ligand>
    <ligandPart>
        <name>Fe</name>
        <dbReference type="ChEBI" id="CHEBI:18248"/>
    </ligandPart>
</feature>
<feature type="cross-link" description="1'-histidyl-3'-tyrosine (His-Tyr)" evidence="2">
    <location>
        <begin position="237"/>
        <end position="241"/>
    </location>
</feature>
<gene>
    <name type="primary">COI</name>
</gene>
<accession>Q34941</accession>
<comment type="function">
    <text evidence="2">Component of the cytochrome c oxidase, the last enzyme in the mitochondrial electron transport chain which drives oxidative phosphorylation. The respiratory chain contains 3 multisubunit complexes succinate dehydrogenase (complex II, CII), ubiquinol-cytochrome c oxidoreductase (cytochrome b-c1 complex, complex III, CIII) and cytochrome c oxidase (complex IV, CIV), that cooperate to transfer electrons derived from NADH and succinate to molecular oxygen, creating an electrochemical gradient over the inner membrane that drives transmembrane transport and the ATP synthase. Cytochrome c oxidase is the component of the respiratory chain that catalyzes the reduction of oxygen to water. Electrons originating from reduced cytochrome c in the intermembrane space (IMS) are transferred via the dinuclear copper A center (CU(A)) of subunit 2 and heme A of subunit 1 to the active site in subunit 1, a binuclear center (BNC) formed by heme A3 and copper B (CU(B)). The BNC reduces molecular oxygen to 2 water molecules using 4 electrons from cytochrome c in the IMS and 4 protons from the mitochondrial matrix.</text>
</comment>
<comment type="catalytic activity">
    <reaction evidence="2">
        <text>4 Fe(II)-[cytochrome c] + O2 + 8 H(+)(in) = 4 Fe(III)-[cytochrome c] + 2 H2O + 4 H(+)(out)</text>
        <dbReference type="Rhea" id="RHEA:11436"/>
        <dbReference type="Rhea" id="RHEA-COMP:10350"/>
        <dbReference type="Rhea" id="RHEA-COMP:14399"/>
        <dbReference type="ChEBI" id="CHEBI:15377"/>
        <dbReference type="ChEBI" id="CHEBI:15378"/>
        <dbReference type="ChEBI" id="CHEBI:15379"/>
        <dbReference type="ChEBI" id="CHEBI:29033"/>
        <dbReference type="ChEBI" id="CHEBI:29034"/>
        <dbReference type="EC" id="7.1.1.9"/>
    </reaction>
    <physiologicalReaction direction="left-to-right" evidence="2">
        <dbReference type="Rhea" id="RHEA:11437"/>
    </physiologicalReaction>
</comment>
<comment type="cofactor">
    <cofactor evidence="2">
        <name>heme</name>
        <dbReference type="ChEBI" id="CHEBI:30413"/>
    </cofactor>
    <text evidence="2">Binds 2 heme A groups non-covalently per subunit.</text>
</comment>
<comment type="cofactor">
    <cofactor evidence="2">
        <name>Cu cation</name>
        <dbReference type="ChEBI" id="CHEBI:23378"/>
    </cofactor>
    <text evidence="2">Binds a copper B center.</text>
</comment>
<comment type="pathway">
    <text evidence="2">Energy metabolism; oxidative phosphorylation.</text>
</comment>
<comment type="subunit">
    <text evidence="2">Component of the cytochrome c oxidase (complex IV, CIV), a multisubunit enzyme composed of a catalytic core of 3 subunits and several supernumerary subunits. The complex exists as a monomer or a dimer and forms supercomplexes (SCs) in the inner mitochondrial membrane with ubiquinol-cytochrome c oxidoreductase (cytochrome b-c1 complex, complex III, CIII).</text>
</comment>
<comment type="subcellular location">
    <subcellularLocation>
        <location evidence="2">Mitochondrion inner membrane</location>
        <topology evidence="2">Multi-pass membrane protein</topology>
    </subcellularLocation>
</comment>
<comment type="similarity">
    <text evidence="4">Belongs to the heme-copper respiratory oxidase family.</text>
</comment>